<reference key="1">
    <citation type="journal article" date="2004" name="FEBS Lett.">
        <title>Hypoxia induces transcription of 6-phosphofructo-2-kinase/fructose-2,6-biphosphatase-4 gene via hypoxia-inducible factor-1alpha activation.</title>
        <authorList>
            <person name="Minchenko O."/>
            <person name="Opentanova I."/>
            <person name="Minchenko D."/>
            <person name="Ogura T."/>
            <person name="Esumi H."/>
        </authorList>
    </citation>
    <scope>NUCLEOTIDE SEQUENCE [MRNA] (ISOFORMS 2 AND 3)</scope>
    <scope>ALTERNATIVE SPLICING</scope>
</reference>
<reference key="2">
    <citation type="submission" date="1997-03" db="EMBL/GenBank/DDBJ databases">
        <authorList>
            <person name="Sakakibara R."/>
        </authorList>
    </citation>
    <scope>NUCLEOTIDE SEQUENCE [MRNA] (ISOFORM 1)</scope>
</reference>
<reference key="3">
    <citation type="submission" date="2004-08" db="EMBL/GenBank/DDBJ databases">
        <title>Alternative splicing of human 6-phosphofructo-2-kinase/fructose-2,6-phosphatase 4 in melanoma cells.</title>
        <authorList>
            <person name="Minchenko O.H."/>
            <person name="Opentanova I.L."/>
            <person name="Minchenko D.O."/>
            <person name="Kurashima Y."/>
            <person name="Esumi H."/>
        </authorList>
    </citation>
    <scope>NUCLEOTIDE SEQUENCE [MRNA] (ISOFORM 3)</scope>
    <scope>ALTERNATIVE SPLICING</scope>
</reference>
<reference key="4">
    <citation type="journal article" date="1999" name="Gene">
        <title>Cloning, expression and chromosomal localization of a human testis 6-phosphofructo-2-kinase/fructose-2,6-bisphosphatase gene.</title>
        <authorList>
            <person name="Manzano A."/>
            <person name="Perez J.X."/>
            <person name="Nadal M."/>
            <person name="Estivill X."/>
            <person name="Lange A."/>
            <person name="Bartrons R."/>
        </authorList>
    </citation>
    <scope>NUCLEOTIDE SEQUENCE [MRNA] (ISOFORM 1)</scope>
    <source>
        <tissue>Testis</tissue>
    </source>
</reference>
<reference key="5">
    <citation type="journal article" date="2005" name="FEBS Lett.">
        <title>Specific expression of pfkfb4 gene in spermatogonia germ cells and analysis of its 5'-flanking region.</title>
        <authorList>
            <person name="Gomez M."/>
            <person name="Manzano A."/>
            <person name="Navarro-Sabate A."/>
            <person name="Duran J."/>
            <person name="Obach M."/>
            <person name="Perales J.C."/>
            <person name="Bartrons R."/>
        </authorList>
    </citation>
    <scope>NUCLEOTIDE SEQUENCE [GENOMIC DNA]</scope>
</reference>
<reference key="6">
    <citation type="journal article" date="2006" name="Nature">
        <title>The DNA sequence, annotation and analysis of human chromosome 3.</title>
        <authorList>
            <person name="Muzny D.M."/>
            <person name="Scherer S.E."/>
            <person name="Kaul R."/>
            <person name="Wang J."/>
            <person name="Yu J."/>
            <person name="Sudbrak R."/>
            <person name="Buhay C.J."/>
            <person name="Chen R."/>
            <person name="Cree A."/>
            <person name="Ding Y."/>
            <person name="Dugan-Rocha S."/>
            <person name="Gill R."/>
            <person name="Gunaratne P."/>
            <person name="Harris R.A."/>
            <person name="Hawes A.C."/>
            <person name="Hernandez J."/>
            <person name="Hodgson A.V."/>
            <person name="Hume J."/>
            <person name="Jackson A."/>
            <person name="Khan Z.M."/>
            <person name="Kovar-Smith C."/>
            <person name="Lewis L.R."/>
            <person name="Lozado R.J."/>
            <person name="Metzker M.L."/>
            <person name="Milosavljevic A."/>
            <person name="Miner G.R."/>
            <person name="Morgan M.B."/>
            <person name="Nazareth L.V."/>
            <person name="Scott G."/>
            <person name="Sodergren E."/>
            <person name="Song X.-Z."/>
            <person name="Steffen D."/>
            <person name="Wei S."/>
            <person name="Wheeler D.A."/>
            <person name="Wright M.W."/>
            <person name="Worley K.C."/>
            <person name="Yuan Y."/>
            <person name="Zhang Z."/>
            <person name="Adams C.Q."/>
            <person name="Ansari-Lari M.A."/>
            <person name="Ayele M."/>
            <person name="Brown M.J."/>
            <person name="Chen G."/>
            <person name="Chen Z."/>
            <person name="Clendenning J."/>
            <person name="Clerc-Blankenburg K.P."/>
            <person name="Chen R."/>
            <person name="Chen Z."/>
            <person name="Davis C."/>
            <person name="Delgado O."/>
            <person name="Dinh H.H."/>
            <person name="Dong W."/>
            <person name="Draper H."/>
            <person name="Ernst S."/>
            <person name="Fu G."/>
            <person name="Gonzalez-Garay M.L."/>
            <person name="Garcia D.K."/>
            <person name="Gillett W."/>
            <person name="Gu J."/>
            <person name="Hao B."/>
            <person name="Haugen E."/>
            <person name="Havlak P."/>
            <person name="He X."/>
            <person name="Hennig S."/>
            <person name="Hu S."/>
            <person name="Huang W."/>
            <person name="Jackson L.R."/>
            <person name="Jacob L.S."/>
            <person name="Kelly S.H."/>
            <person name="Kube M."/>
            <person name="Levy R."/>
            <person name="Li Z."/>
            <person name="Liu B."/>
            <person name="Liu J."/>
            <person name="Liu W."/>
            <person name="Lu J."/>
            <person name="Maheshwari M."/>
            <person name="Nguyen B.-V."/>
            <person name="Okwuonu G.O."/>
            <person name="Palmeiri A."/>
            <person name="Pasternak S."/>
            <person name="Perez L.M."/>
            <person name="Phelps K.A."/>
            <person name="Plopper F.J."/>
            <person name="Qiang B."/>
            <person name="Raymond C."/>
            <person name="Rodriguez R."/>
            <person name="Saenphimmachak C."/>
            <person name="Santibanez J."/>
            <person name="Shen H."/>
            <person name="Shen Y."/>
            <person name="Subramanian S."/>
            <person name="Tabor P.E."/>
            <person name="Verduzco D."/>
            <person name="Waldron L."/>
            <person name="Wang J."/>
            <person name="Wang J."/>
            <person name="Wang Q."/>
            <person name="Williams G.A."/>
            <person name="Wong G.K.-S."/>
            <person name="Yao Z."/>
            <person name="Zhang J."/>
            <person name="Zhang X."/>
            <person name="Zhao G."/>
            <person name="Zhou J."/>
            <person name="Zhou Y."/>
            <person name="Nelson D."/>
            <person name="Lehrach H."/>
            <person name="Reinhardt R."/>
            <person name="Naylor S.L."/>
            <person name="Yang H."/>
            <person name="Olson M."/>
            <person name="Weinstock G."/>
            <person name="Gibbs R.A."/>
        </authorList>
    </citation>
    <scope>NUCLEOTIDE SEQUENCE [LARGE SCALE GENOMIC DNA]</scope>
</reference>
<reference key="7">
    <citation type="submission" date="2005-07" db="EMBL/GenBank/DDBJ databases">
        <authorList>
            <person name="Mural R.J."/>
            <person name="Istrail S."/>
            <person name="Sutton G.G."/>
            <person name="Florea L."/>
            <person name="Halpern A.L."/>
            <person name="Mobarry C.M."/>
            <person name="Lippert R."/>
            <person name="Walenz B."/>
            <person name="Shatkay H."/>
            <person name="Dew I."/>
            <person name="Miller J.R."/>
            <person name="Flanigan M.J."/>
            <person name="Edwards N.J."/>
            <person name="Bolanos R."/>
            <person name="Fasulo D."/>
            <person name="Halldorsson B.V."/>
            <person name="Hannenhalli S."/>
            <person name="Turner R."/>
            <person name="Yooseph S."/>
            <person name="Lu F."/>
            <person name="Nusskern D.R."/>
            <person name="Shue B.C."/>
            <person name="Zheng X.H."/>
            <person name="Zhong F."/>
            <person name="Delcher A.L."/>
            <person name="Huson D.H."/>
            <person name="Kravitz S.A."/>
            <person name="Mouchard L."/>
            <person name="Reinert K."/>
            <person name="Remington K.A."/>
            <person name="Clark A.G."/>
            <person name="Waterman M.S."/>
            <person name="Eichler E.E."/>
            <person name="Adams M.D."/>
            <person name="Hunkapiller M.W."/>
            <person name="Myers E.W."/>
            <person name="Venter J.C."/>
        </authorList>
    </citation>
    <scope>NUCLEOTIDE SEQUENCE [LARGE SCALE GENOMIC DNA]</scope>
</reference>
<reference key="8">
    <citation type="journal article" date="2004" name="Genome Res.">
        <title>The status, quality, and expansion of the NIH full-length cDNA project: the Mammalian Gene Collection (MGC).</title>
        <authorList>
            <consortium name="The MGC Project Team"/>
        </authorList>
    </citation>
    <scope>NUCLEOTIDE SEQUENCE [LARGE SCALE MRNA] (ISOFORM 1)</scope>
    <source>
        <tissue>Placenta</tissue>
    </source>
</reference>
<reference key="9">
    <citation type="journal article" date="1996" name="J. Biochem.">
        <title>Cloning of cDNA encoding for a novel isozyme of fructose 6-phosphate, 2-kinase/fructose 2,6-bisphosphatase from human placenta.</title>
        <authorList>
            <person name="Sakai A."/>
            <person name="Kato M."/>
            <person name="Fukasawa M."/>
            <person name="Ishiguro M."/>
            <person name="Furuya E."/>
            <person name="Sakakibara R."/>
        </authorList>
    </citation>
    <scope>NUCLEOTIDE SEQUENCE [MRNA] OF 357-469 (ISOFORM 1)</scope>
    <source>
        <tissue>Placenta</tissue>
    </source>
</reference>
<reference key="10">
    <citation type="journal article" date="2006" name="Science">
        <title>The consensus coding sequences of human breast and colorectal cancers.</title>
        <authorList>
            <person name="Sjoeblom T."/>
            <person name="Jones S."/>
            <person name="Wood L.D."/>
            <person name="Parsons D.W."/>
            <person name="Lin J."/>
            <person name="Barber T.D."/>
            <person name="Mandelker D."/>
            <person name="Leary R.J."/>
            <person name="Ptak J."/>
            <person name="Silliman N."/>
            <person name="Szabo S."/>
            <person name="Buckhaults P."/>
            <person name="Farrell C."/>
            <person name="Meeh P."/>
            <person name="Markowitz S.D."/>
            <person name="Willis J."/>
            <person name="Dawson D."/>
            <person name="Willson J.K.V."/>
            <person name="Gazdar A.F."/>
            <person name="Hartigan J."/>
            <person name="Wu L."/>
            <person name="Liu C."/>
            <person name="Parmigiani G."/>
            <person name="Park B.H."/>
            <person name="Bachman K.E."/>
            <person name="Papadopoulos N."/>
            <person name="Vogelstein B."/>
            <person name="Kinzler K.W."/>
            <person name="Velculescu V.E."/>
        </authorList>
    </citation>
    <scope>VARIANT [LARGE SCALE ANALYSIS] LYS-181</scope>
</reference>
<name>F264_HUMAN</name>
<sequence length="469" mass="54040">MASPRELTQNPLKKIWMPYSNGRPALHACQRGVCMTNCPTLIVMVGLPARGKTYISKKLTRYLNWIGVPTREFNVGQYRRDVVKTYKSFEFFLPDNEEGLKIRKQCALAALRDVRRFLSEEGGHVAVFDATNTTRERRATIFNFGEQNGYKTFFVESICVDPEVIAANIVQVKLGSPDYVNRDSDEATEDFMRRIECYENSYESLDEDLDRDLSYIKIMDVGQSYVVNRVADHIQSRIVYYLMNIHVTPRSIYLCRHGESELNLKGRIGGDPGLSPRGREFAKSLAQFISDQNIKDLKVWTSQMKRTIQTAEALGVPYEQWKVLNEIDAGVCEEMTYEEIQDNYPLEFALRDQDKYRYRYPKGESYEDLVQRLEPVIMELERQENVLVICHQAVMRCLLAYFLDKAAEQLPYLKCPLHTVLKLTPVAYGCKVESIFLNVAAVNTHRDRPQNVDISRPPEEALVTVPAHQ</sequence>
<feature type="chain" id="PRO_0000179970" description="6-phosphofructo-2-kinase/fructose-2,6-bisphosphatase 4">
    <location>
        <begin position="1"/>
        <end position="469"/>
    </location>
</feature>
<feature type="region of interest" description="6-phosphofructo-2-kinase">
    <location>
        <begin position="1"/>
        <end position="249"/>
    </location>
</feature>
<feature type="region of interest" description="Fructose-2,6-bisphosphatase">
    <location>
        <begin position="250"/>
        <end position="469"/>
    </location>
</feature>
<feature type="active site" evidence="5">
    <location>
        <position position="129"/>
    </location>
</feature>
<feature type="active site" evidence="5">
    <location>
        <position position="159"/>
    </location>
</feature>
<feature type="active site" description="Tele-phosphohistidine intermediate" evidence="3">
    <location>
        <position position="257"/>
    </location>
</feature>
<feature type="active site" description="Proton donor/acceptor" evidence="3">
    <location>
        <position position="326"/>
    </location>
</feature>
<feature type="binding site" evidence="4">
    <location>
        <begin position="46"/>
        <end position="54"/>
    </location>
    <ligand>
        <name>ATP</name>
        <dbReference type="ChEBI" id="CHEBI:30616"/>
    </ligand>
</feature>
<feature type="binding site" evidence="4">
    <location>
        <position position="79"/>
    </location>
    <ligand>
        <name>beta-D-fructose 6-phosphate</name>
        <dbReference type="ChEBI" id="CHEBI:57634"/>
    </ligand>
</feature>
<feature type="binding site" evidence="4">
    <location>
        <position position="103"/>
    </location>
    <ligand>
        <name>beta-D-fructose 6-phosphate</name>
        <dbReference type="ChEBI" id="CHEBI:57634"/>
    </ligand>
</feature>
<feature type="binding site" evidence="4">
    <location>
        <position position="131"/>
    </location>
    <ligand>
        <name>beta-D-fructose 6-phosphate</name>
        <dbReference type="ChEBI" id="CHEBI:57634"/>
    </ligand>
</feature>
<feature type="binding site" evidence="4">
    <location>
        <position position="137"/>
    </location>
    <ligand>
        <name>beta-D-fructose 6-phosphate</name>
        <dbReference type="ChEBI" id="CHEBI:57634"/>
    </ligand>
</feature>
<feature type="binding site" evidence="4">
    <location>
        <begin position="168"/>
        <end position="173"/>
    </location>
    <ligand>
        <name>ATP</name>
        <dbReference type="ChEBI" id="CHEBI:30616"/>
    </ligand>
</feature>
<feature type="binding site" evidence="4">
    <location>
        <position position="173"/>
    </location>
    <ligand>
        <name>beta-D-fructose 6-phosphate</name>
        <dbReference type="ChEBI" id="CHEBI:57634"/>
    </ligand>
</feature>
<feature type="binding site" evidence="4">
    <location>
        <position position="194"/>
    </location>
    <ligand>
        <name>beta-D-fructose 6-phosphate</name>
        <dbReference type="ChEBI" id="CHEBI:57634"/>
    </ligand>
</feature>
<feature type="binding site" evidence="4">
    <location>
        <position position="198"/>
    </location>
    <ligand>
        <name>beta-D-fructose 6-phosphate</name>
        <dbReference type="ChEBI" id="CHEBI:57634"/>
    </ligand>
</feature>
<feature type="binding site" evidence="4">
    <location>
        <position position="256"/>
    </location>
    <ligand>
        <name>beta-D-fructose 2,6-bisphosphate</name>
        <dbReference type="ChEBI" id="CHEBI:58579"/>
    </ligand>
</feature>
<feature type="binding site" evidence="4">
    <location>
        <position position="263"/>
    </location>
    <ligand>
        <name>beta-D-fructose 2,6-bisphosphate</name>
        <dbReference type="ChEBI" id="CHEBI:58579"/>
    </ligand>
</feature>
<feature type="binding site" evidence="3">
    <location>
        <position position="269"/>
    </location>
    <ligand>
        <name>beta-D-fructose 2,6-bisphosphate</name>
        <dbReference type="ChEBI" id="CHEBI:58579"/>
    </ligand>
</feature>
<feature type="binding site" evidence="4">
    <location>
        <position position="306"/>
    </location>
    <ligand>
        <name>beta-D-fructose 2,6-bisphosphate</name>
        <dbReference type="ChEBI" id="CHEBI:58579"/>
    </ligand>
</feature>
<feature type="binding site" evidence="3">
    <location>
        <position position="337"/>
    </location>
    <ligand>
        <name>beta-D-fructose 2,6-bisphosphate</name>
        <dbReference type="ChEBI" id="CHEBI:58579"/>
    </ligand>
</feature>
<feature type="binding site" evidence="3">
    <location>
        <begin position="348"/>
        <end position="351"/>
    </location>
    <ligand>
        <name>ATP</name>
        <dbReference type="ChEBI" id="CHEBI:30616"/>
    </ligand>
</feature>
<feature type="binding site" evidence="3">
    <location>
        <position position="351"/>
    </location>
    <ligand>
        <name>beta-D-fructose 2,6-bisphosphate</name>
        <dbReference type="ChEBI" id="CHEBI:58579"/>
    </ligand>
</feature>
<feature type="binding site" evidence="3">
    <location>
        <position position="355"/>
    </location>
    <ligand>
        <name>beta-D-fructose 2,6-bisphosphate</name>
        <dbReference type="ChEBI" id="CHEBI:58579"/>
    </ligand>
</feature>
<feature type="binding site" evidence="3">
    <location>
        <position position="366"/>
    </location>
    <ligand>
        <name>beta-D-fructose 2,6-bisphosphate</name>
        <dbReference type="ChEBI" id="CHEBI:58579"/>
    </ligand>
</feature>
<feature type="binding site" evidence="3">
    <location>
        <begin position="392"/>
        <end position="396"/>
    </location>
    <ligand>
        <name>ATP</name>
        <dbReference type="ChEBI" id="CHEBI:30616"/>
    </ligand>
</feature>
<feature type="binding site" evidence="3">
    <location>
        <position position="392"/>
    </location>
    <ligand>
        <name>beta-D-fructose 2,6-bisphosphate</name>
        <dbReference type="ChEBI" id="CHEBI:58579"/>
    </ligand>
</feature>
<feature type="binding site" evidence="3">
    <location>
        <position position="396"/>
    </location>
    <ligand>
        <name>beta-D-fructose 2,6-bisphosphate</name>
        <dbReference type="ChEBI" id="CHEBI:58579"/>
    </ligand>
</feature>
<feature type="binding site" evidence="4">
    <location>
        <position position="428"/>
    </location>
    <ligand>
        <name>ATP</name>
        <dbReference type="ChEBI" id="CHEBI:30616"/>
    </ligand>
</feature>
<feature type="site" description="Transition state stabilizer" evidence="2">
    <location>
        <position position="391"/>
    </location>
</feature>
<feature type="modified residue" description="Phosphothreonine; by PKC" evidence="5">
    <location>
        <position position="444"/>
    </location>
</feature>
<feature type="splice variant" id="VSP_056621" description="In isoform 3." evidence="7 8">
    <location>
        <begin position="1"/>
        <end position="34"/>
    </location>
</feature>
<feature type="splice variant" id="VSP_056530" description="In isoform 2." evidence="7">
    <location>
        <begin position="330"/>
        <end position="364"/>
    </location>
</feature>
<feature type="sequence variant" id="VAR_036075" description="In a breast cancer sample; somatic mutation." evidence="6">
    <original>N</original>
    <variation>K</variation>
    <location>
        <position position="181"/>
    </location>
</feature>
<proteinExistence type="evidence at protein level"/>
<evidence type="ECO:0000250" key="1"/>
<evidence type="ECO:0000250" key="2">
    <source>
        <dbReference type="UniProtKB" id="P00950"/>
    </source>
</evidence>
<evidence type="ECO:0000250" key="3">
    <source>
        <dbReference type="UniProtKB" id="P07953"/>
    </source>
</evidence>
<evidence type="ECO:0000250" key="4">
    <source>
        <dbReference type="UniProtKB" id="Q16875"/>
    </source>
</evidence>
<evidence type="ECO:0000255" key="5"/>
<evidence type="ECO:0000269" key="6">
    <source>
    </source>
</evidence>
<evidence type="ECO:0000303" key="7">
    <source>
    </source>
</evidence>
<evidence type="ECO:0000303" key="8">
    <source ref="3"/>
</evidence>
<evidence type="ECO:0000305" key="9"/>
<organism>
    <name type="scientific">Homo sapiens</name>
    <name type="common">Human</name>
    <dbReference type="NCBI Taxonomy" id="9606"/>
    <lineage>
        <taxon>Eukaryota</taxon>
        <taxon>Metazoa</taxon>
        <taxon>Chordata</taxon>
        <taxon>Craniata</taxon>
        <taxon>Vertebrata</taxon>
        <taxon>Euteleostomi</taxon>
        <taxon>Mammalia</taxon>
        <taxon>Eutheria</taxon>
        <taxon>Euarchontoglires</taxon>
        <taxon>Primates</taxon>
        <taxon>Haplorrhini</taxon>
        <taxon>Catarrhini</taxon>
        <taxon>Hominidae</taxon>
        <taxon>Homo</taxon>
    </lineage>
</organism>
<protein>
    <recommendedName>
        <fullName>6-phosphofructo-2-kinase/fructose-2,6-bisphosphatase 4</fullName>
        <shortName>6PF-2-K/Fru-2,6-P2ase 4</shortName>
        <shortName>PFK/FBPase 4</shortName>
    </recommendedName>
    <alternativeName>
        <fullName>6PF-2-K/Fru-2,6-P2ase testis-type isozyme</fullName>
    </alternativeName>
    <domain>
        <recommendedName>
            <fullName>6-phosphofructo-2-kinase</fullName>
            <ecNumber>2.7.1.105</ecNumber>
        </recommendedName>
    </domain>
    <domain>
        <recommendedName>
            <fullName>Fructose-2,6-bisphosphatase</fullName>
            <ecNumber>3.1.3.46</ecNumber>
        </recommendedName>
    </domain>
</protein>
<dbReference type="EC" id="2.7.1.105"/>
<dbReference type="EC" id="3.1.3.46"/>
<dbReference type="EMBL" id="AY756062">
    <property type="protein sequence ID" value="AAV28717.1"/>
    <property type="molecule type" value="mRNA"/>
</dbReference>
<dbReference type="EMBL" id="AY756064">
    <property type="protein sequence ID" value="AAV28719.1"/>
    <property type="molecule type" value="mRNA"/>
</dbReference>
<dbReference type="EMBL" id="D49818">
    <property type="protein sequence ID" value="BAA18921.1"/>
    <property type="molecule type" value="mRNA"/>
</dbReference>
<dbReference type="EMBL" id="AY714243">
    <property type="protein sequence ID" value="AAU14998.1"/>
    <property type="molecule type" value="mRNA"/>
</dbReference>
<dbReference type="EMBL" id="AF108765">
    <property type="protein sequence ID" value="AAD09427.1"/>
    <property type="molecule type" value="mRNA"/>
</dbReference>
<dbReference type="EMBL" id="AY786551">
    <property type="protein sequence ID" value="AAV65753.1"/>
    <property type="molecule type" value="Genomic_DNA"/>
</dbReference>
<dbReference type="EMBL" id="AC134772">
    <property type="status" value="NOT_ANNOTATED_CDS"/>
    <property type="molecule type" value="Genomic_DNA"/>
</dbReference>
<dbReference type="EMBL" id="CH471055">
    <property type="protein sequence ID" value="EAW64890.1"/>
    <property type="molecule type" value="Genomic_DNA"/>
</dbReference>
<dbReference type="EMBL" id="BC010269">
    <property type="protein sequence ID" value="AAH10269.1"/>
    <property type="molecule type" value="mRNA"/>
</dbReference>
<dbReference type="CCDS" id="CCDS2771.1">
    <molecule id="Q16877-1"/>
</dbReference>
<dbReference type="CCDS" id="CCDS82769.1">
    <molecule id="Q16877-2"/>
</dbReference>
<dbReference type="PIR" id="JC5871">
    <property type="entry name" value="JC5871"/>
</dbReference>
<dbReference type="RefSeq" id="NP_001304063.1">
    <property type="nucleotide sequence ID" value="NM_001317134.1"/>
</dbReference>
<dbReference type="RefSeq" id="NP_001304064.1">
    <property type="nucleotide sequence ID" value="NM_001317135.1"/>
</dbReference>
<dbReference type="RefSeq" id="NP_001304065.1">
    <property type="nucleotide sequence ID" value="NM_001317136.1"/>
</dbReference>
<dbReference type="RefSeq" id="NP_001304066.1">
    <molecule id="Q16877-2"/>
    <property type="nucleotide sequence ID" value="NM_001317137.2"/>
</dbReference>
<dbReference type="RefSeq" id="NP_001304067.1">
    <property type="nucleotide sequence ID" value="NM_001317138.1"/>
</dbReference>
<dbReference type="RefSeq" id="NP_004558.1">
    <molecule id="Q16877-1"/>
    <property type="nucleotide sequence ID" value="NM_004567.4"/>
</dbReference>
<dbReference type="RefSeq" id="XP_024309363.1">
    <molecule id="Q16877-3"/>
    <property type="nucleotide sequence ID" value="XM_024453595.2"/>
</dbReference>
<dbReference type="RefSeq" id="XP_047304258.1">
    <molecule id="Q16877-3"/>
    <property type="nucleotide sequence ID" value="XM_047448302.1"/>
</dbReference>
<dbReference type="RefSeq" id="XP_047304259.1">
    <molecule id="Q16877-3"/>
    <property type="nucleotide sequence ID" value="XM_047448303.1"/>
</dbReference>
<dbReference type="RefSeq" id="XP_054202809.1">
    <molecule id="Q16877-3"/>
    <property type="nucleotide sequence ID" value="XM_054346834.1"/>
</dbReference>
<dbReference type="RefSeq" id="XP_054202810.1">
    <molecule id="Q16877-3"/>
    <property type="nucleotide sequence ID" value="XM_054346835.1"/>
</dbReference>
<dbReference type="RefSeq" id="XP_054202811.1">
    <molecule id="Q16877-3"/>
    <property type="nucleotide sequence ID" value="XM_054346836.1"/>
</dbReference>
<dbReference type="SMR" id="Q16877"/>
<dbReference type="BioGRID" id="111231">
    <property type="interactions" value="41"/>
</dbReference>
<dbReference type="ComplexPortal" id="CPX-1996">
    <property type="entry name" value="6-phosphofructo-2-kinase/fructose-2,6-biphosphatase 4 complex"/>
</dbReference>
<dbReference type="FunCoup" id="Q16877">
    <property type="interactions" value="1224"/>
</dbReference>
<dbReference type="IntAct" id="Q16877">
    <property type="interactions" value="19"/>
</dbReference>
<dbReference type="MINT" id="Q16877"/>
<dbReference type="STRING" id="9606.ENSP00000232375"/>
<dbReference type="BindingDB" id="Q16877"/>
<dbReference type="ChEMBL" id="CHEMBL3721311"/>
<dbReference type="DrugBank" id="DB04493">
    <property type="generic name" value="Fructose-6-phosphate"/>
</dbReference>
<dbReference type="DrugBank" id="DB04395">
    <property type="generic name" value="Phosphoaminophosphonic Acid-Adenylate Ester"/>
</dbReference>
<dbReference type="DEPOD" id="PFKFB4"/>
<dbReference type="GlyGen" id="Q16877">
    <property type="glycosylation" value="2 sites, 1 O-linked glycan (1 site)"/>
</dbReference>
<dbReference type="iPTMnet" id="Q16877"/>
<dbReference type="PhosphoSitePlus" id="Q16877"/>
<dbReference type="BioMuta" id="PFKFB4"/>
<dbReference type="DMDM" id="6226609"/>
<dbReference type="jPOST" id="Q16877"/>
<dbReference type="MassIVE" id="Q16877"/>
<dbReference type="PaxDb" id="9606-ENSP00000232375"/>
<dbReference type="PeptideAtlas" id="Q16877"/>
<dbReference type="ProteomicsDB" id="61116">
    <molecule id="Q16877-1"/>
</dbReference>
<dbReference type="ProteomicsDB" id="65838"/>
<dbReference type="ProteomicsDB" id="65916"/>
<dbReference type="Pumba" id="Q16877"/>
<dbReference type="Antibodypedia" id="30130">
    <property type="antibodies" value="189 antibodies from 24 providers"/>
</dbReference>
<dbReference type="DNASU" id="5210"/>
<dbReference type="Ensembl" id="ENST00000232375.8">
    <molecule id="Q16877-1"/>
    <property type="protein sequence ID" value="ENSP00000232375.3"/>
    <property type="gene ID" value="ENSG00000114268.12"/>
</dbReference>
<dbReference type="Ensembl" id="ENST00000383734.6">
    <molecule id="Q16877-2"/>
    <property type="protein sequence ID" value="ENSP00000373240.2"/>
    <property type="gene ID" value="ENSG00000114268.12"/>
</dbReference>
<dbReference type="GeneID" id="5210"/>
<dbReference type="KEGG" id="hsa:5210"/>
<dbReference type="MANE-Select" id="ENST00000232375.8">
    <property type="protein sequence ID" value="ENSP00000232375.3"/>
    <property type="RefSeq nucleotide sequence ID" value="NM_004567.4"/>
    <property type="RefSeq protein sequence ID" value="NP_004558.1"/>
</dbReference>
<dbReference type="UCSC" id="uc003ctv.4">
    <molecule id="Q16877-1"/>
    <property type="organism name" value="human"/>
</dbReference>
<dbReference type="AGR" id="HGNC:8875"/>
<dbReference type="CTD" id="5210"/>
<dbReference type="DisGeNET" id="5210"/>
<dbReference type="GeneCards" id="PFKFB4"/>
<dbReference type="HGNC" id="HGNC:8875">
    <property type="gene designation" value="PFKFB4"/>
</dbReference>
<dbReference type="HPA" id="ENSG00000114268">
    <property type="expression patterns" value="Tissue enhanced (testis)"/>
</dbReference>
<dbReference type="MIM" id="605320">
    <property type="type" value="gene"/>
</dbReference>
<dbReference type="neXtProt" id="NX_Q16877"/>
<dbReference type="OpenTargets" id="ENSG00000114268"/>
<dbReference type="PharmGKB" id="PA33214"/>
<dbReference type="VEuPathDB" id="HostDB:ENSG00000114268"/>
<dbReference type="eggNOG" id="KOG0234">
    <property type="taxonomic scope" value="Eukaryota"/>
</dbReference>
<dbReference type="GeneTree" id="ENSGT00950000182835"/>
<dbReference type="HOGENOM" id="CLU_006383_1_1_1"/>
<dbReference type="InParanoid" id="Q16877"/>
<dbReference type="OMA" id="GECYGMT"/>
<dbReference type="OrthoDB" id="267323at2759"/>
<dbReference type="PAN-GO" id="Q16877">
    <property type="GO annotations" value="4 GO annotations based on evolutionary models"/>
</dbReference>
<dbReference type="PhylomeDB" id="Q16877"/>
<dbReference type="TreeFam" id="TF313541"/>
<dbReference type="BioCyc" id="MetaCyc:HS03750-MONOMER"/>
<dbReference type="BRENDA" id="2.7.1.105">
    <property type="organism ID" value="2681"/>
</dbReference>
<dbReference type="BRENDA" id="3.1.3.46">
    <property type="organism ID" value="2681"/>
</dbReference>
<dbReference type="PathwayCommons" id="Q16877"/>
<dbReference type="Reactome" id="R-HSA-9634600">
    <property type="pathway name" value="Regulation of glycolysis by fructose 2,6-bisphosphate metabolism"/>
</dbReference>
<dbReference type="SignaLink" id="Q16877"/>
<dbReference type="SIGNOR" id="Q16877"/>
<dbReference type="BioGRID-ORCS" id="5210">
    <property type="hits" value="25 hits in 1171 CRISPR screens"/>
</dbReference>
<dbReference type="ChiTaRS" id="PFKFB4">
    <property type="organism name" value="human"/>
</dbReference>
<dbReference type="GeneWiki" id="PFKFB4"/>
<dbReference type="GenomeRNAi" id="5210"/>
<dbReference type="Pharos" id="Q16877">
    <property type="development level" value="Tchem"/>
</dbReference>
<dbReference type="PRO" id="PR:Q16877"/>
<dbReference type="Proteomes" id="UP000005640">
    <property type="component" value="Chromosome 3"/>
</dbReference>
<dbReference type="RNAct" id="Q16877">
    <property type="molecule type" value="protein"/>
</dbReference>
<dbReference type="Bgee" id="ENSG00000114268">
    <property type="expression patterns" value="Expressed in blood and 120 other cell types or tissues"/>
</dbReference>
<dbReference type="ExpressionAtlas" id="Q16877">
    <property type="expression patterns" value="baseline and differential"/>
</dbReference>
<dbReference type="GO" id="GO:0005829">
    <property type="term" value="C:cytosol"/>
    <property type="evidence" value="ECO:0000318"/>
    <property type="project" value="GO_Central"/>
</dbReference>
<dbReference type="GO" id="GO:0003873">
    <property type="term" value="F:6-phosphofructo-2-kinase activity"/>
    <property type="evidence" value="ECO:0000318"/>
    <property type="project" value="GO_Central"/>
</dbReference>
<dbReference type="GO" id="GO:0005524">
    <property type="term" value="F:ATP binding"/>
    <property type="evidence" value="ECO:0007669"/>
    <property type="project" value="UniProtKB-KW"/>
</dbReference>
<dbReference type="GO" id="GO:0004331">
    <property type="term" value="F:fructose-2,6-bisphosphate 2-phosphatase activity"/>
    <property type="evidence" value="ECO:0000318"/>
    <property type="project" value="GO_Central"/>
</dbReference>
<dbReference type="GO" id="GO:0006003">
    <property type="term" value="P:fructose 2,6-bisphosphate metabolic process"/>
    <property type="evidence" value="ECO:0000318"/>
    <property type="project" value="GO_Central"/>
</dbReference>
<dbReference type="GO" id="GO:0006000">
    <property type="term" value="P:fructose metabolic process"/>
    <property type="evidence" value="ECO:0007669"/>
    <property type="project" value="InterPro"/>
</dbReference>
<dbReference type="CDD" id="cd07067">
    <property type="entry name" value="HP_PGM_like"/>
    <property type="match status" value="1"/>
</dbReference>
<dbReference type="FunFam" id="3.40.50.1240:FF:000001">
    <property type="entry name" value="6-phosphofructo-2-kinase/fructose-2, 6-bisphosphatase 3 isoform 2"/>
    <property type="match status" value="1"/>
</dbReference>
<dbReference type="FunFam" id="3.40.50.300:FF:000047">
    <property type="entry name" value="6-phosphofructo-2-kinase/fructose-2, 6-bisphosphatase 3 isoform 2"/>
    <property type="match status" value="1"/>
</dbReference>
<dbReference type="Gene3D" id="3.40.50.300">
    <property type="entry name" value="P-loop containing nucleotide triphosphate hydrolases"/>
    <property type="match status" value="1"/>
</dbReference>
<dbReference type="Gene3D" id="3.40.50.1240">
    <property type="entry name" value="Phosphoglycerate mutase-like"/>
    <property type="match status" value="1"/>
</dbReference>
<dbReference type="InterPro" id="IPR003094">
    <property type="entry name" value="6Pfruct_kin"/>
</dbReference>
<dbReference type="InterPro" id="IPR013079">
    <property type="entry name" value="6Phosfructo_kin"/>
</dbReference>
<dbReference type="InterPro" id="IPR013078">
    <property type="entry name" value="His_Pase_superF_clade-1"/>
</dbReference>
<dbReference type="InterPro" id="IPR029033">
    <property type="entry name" value="His_PPase_superfam"/>
</dbReference>
<dbReference type="InterPro" id="IPR027417">
    <property type="entry name" value="P-loop_NTPase"/>
</dbReference>
<dbReference type="InterPro" id="IPR001345">
    <property type="entry name" value="PG/BPGM_mutase_AS"/>
</dbReference>
<dbReference type="PANTHER" id="PTHR10606">
    <property type="entry name" value="6-PHOSPHOFRUCTO-2-KINASE/FRUCTOSE-2,6-BISPHOSPHATASE"/>
    <property type="match status" value="1"/>
</dbReference>
<dbReference type="PANTHER" id="PTHR10606:SF14">
    <property type="entry name" value="6-PHOSPHOFRUCTO-2-KINASE_FRUCTOSE-2,6-BISPHOSPHATASE 4"/>
    <property type="match status" value="1"/>
</dbReference>
<dbReference type="Pfam" id="PF01591">
    <property type="entry name" value="6PF2K"/>
    <property type="match status" value="1"/>
</dbReference>
<dbReference type="Pfam" id="PF00300">
    <property type="entry name" value="His_Phos_1"/>
    <property type="match status" value="1"/>
</dbReference>
<dbReference type="PIRSF" id="PIRSF000709">
    <property type="entry name" value="6PFK_2-Ptase"/>
    <property type="match status" value="1"/>
</dbReference>
<dbReference type="PRINTS" id="PR00991">
    <property type="entry name" value="6PFRUCTKNASE"/>
</dbReference>
<dbReference type="SMART" id="SM00855">
    <property type="entry name" value="PGAM"/>
    <property type="match status" value="1"/>
</dbReference>
<dbReference type="SUPFAM" id="SSF52540">
    <property type="entry name" value="P-loop containing nucleoside triphosphate hydrolases"/>
    <property type="match status" value="1"/>
</dbReference>
<dbReference type="SUPFAM" id="SSF53254">
    <property type="entry name" value="Phosphoglycerate mutase-like"/>
    <property type="match status" value="1"/>
</dbReference>
<dbReference type="PROSITE" id="PS00175">
    <property type="entry name" value="PG_MUTASE"/>
    <property type="match status" value="1"/>
</dbReference>
<comment type="function">
    <text>Synthesis and degradation of fructose 2,6-bisphosphate.</text>
</comment>
<comment type="catalytic activity">
    <reaction>
        <text>beta-D-fructose 2,6-bisphosphate + H2O = beta-D-fructose 6-phosphate + phosphate</text>
        <dbReference type="Rhea" id="RHEA:17289"/>
        <dbReference type="ChEBI" id="CHEBI:15377"/>
        <dbReference type="ChEBI" id="CHEBI:43474"/>
        <dbReference type="ChEBI" id="CHEBI:57634"/>
        <dbReference type="ChEBI" id="CHEBI:58579"/>
        <dbReference type="EC" id="3.1.3.46"/>
    </reaction>
</comment>
<comment type="catalytic activity">
    <reaction>
        <text>beta-D-fructose 6-phosphate + ATP = beta-D-fructose 2,6-bisphosphate + ADP + H(+)</text>
        <dbReference type="Rhea" id="RHEA:15653"/>
        <dbReference type="ChEBI" id="CHEBI:15378"/>
        <dbReference type="ChEBI" id="CHEBI:30616"/>
        <dbReference type="ChEBI" id="CHEBI:57634"/>
        <dbReference type="ChEBI" id="CHEBI:58579"/>
        <dbReference type="ChEBI" id="CHEBI:456216"/>
        <dbReference type="EC" id="2.7.1.105"/>
    </reaction>
</comment>
<comment type="activity regulation">
    <text evidence="1">The most important regulatory mechanism of these opposing activities is by phosphorylation and dephosphorylation of the enzyme.</text>
</comment>
<comment type="subunit">
    <text evidence="1">Homodimer.</text>
</comment>
<comment type="interaction">
    <interactant intactId="EBI-764534">
        <id>Q16877</id>
    </interactant>
    <interactant intactId="EBI-10171570">
        <id>Q68D86</id>
        <label>CCDC102B</label>
    </interactant>
    <organismsDiffer>false</organismsDiffer>
    <experiments>3</experiments>
</comment>
<comment type="interaction">
    <interactant intactId="EBI-764534">
        <id>Q16877</id>
    </interactant>
    <interactant intactId="EBI-396137">
        <id>Q9UJX2</id>
        <label>CDC23</label>
    </interactant>
    <organismsDiffer>false</organismsDiffer>
    <experiments>3</experiments>
</comment>
<comment type="interaction">
    <interactant intactId="EBI-764534">
        <id>Q16877</id>
    </interactant>
    <interactant intactId="EBI-2510106">
        <id>Q96L50</id>
        <label>LRR1</label>
    </interactant>
    <organismsDiffer>false</organismsDiffer>
    <experiments>3</experiments>
</comment>
<comment type="interaction">
    <interactant intactId="EBI-764534">
        <id>Q16877</id>
    </interactant>
    <interactant intactId="EBI-709807">
        <id>P16118</id>
        <label>PFKFB1</label>
    </interactant>
    <organismsDiffer>false</organismsDiffer>
    <experiments>6</experiments>
</comment>
<comment type="alternative products">
    <event type="alternative splicing"/>
    <isoform>
        <id>Q16877-1</id>
        <name>1</name>
        <sequence type="displayed"/>
    </isoform>
    <isoform>
        <id>Q16877-2</id>
        <name>2</name>
        <sequence type="described" ref="VSP_056530"/>
    </isoform>
    <isoform>
        <id>Q16877-3</id>
        <name>3</name>
        <sequence type="described" ref="VSP_056621"/>
    </isoform>
</comment>
<comment type="similarity">
    <text evidence="9">In the C-terminal section; belongs to the phosphoglycerate mutase family.</text>
</comment>
<keyword id="KW-0025">Alternative splicing</keyword>
<keyword id="KW-0067">ATP-binding</keyword>
<keyword id="KW-0378">Hydrolase</keyword>
<keyword id="KW-0418">Kinase</keyword>
<keyword id="KW-0511">Multifunctional enzyme</keyword>
<keyword id="KW-0547">Nucleotide-binding</keyword>
<keyword id="KW-0597">Phosphoprotein</keyword>
<keyword id="KW-1267">Proteomics identification</keyword>
<keyword id="KW-1185">Reference proteome</keyword>
<keyword id="KW-0808">Transferase</keyword>
<gene>
    <name type="primary">PFKFB4</name>
</gene>
<accession>Q16877</accession>
<accession>Q5S3G5</accession>
<accession>Q5XLC2</accession>
<accession>Q64EX5</accession>